<geneLocation type="chloroplast"/>
<proteinExistence type="evidence at protein level"/>
<gene>
    <name evidence="1" type="primary">psbZ</name>
    <name type="synonym">ycf9</name>
</gene>
<name>PSBZ_PEA</name>
<sequence length="62" mass="6555">MTIAFQLAVFALIVTSSILLISVPVVFASPDGWSSNKNVVFSGTSLWIGLVFLVGILNSLIS</sequence>
<feature type="chain" id="PRO_0000217722" description="Photosystem II reaction center protein Z">
    <location>
        <begin position="1"/>
        <end position="62"/>
    </location>
</feature>
<feature type="transmembrane region" description="Helical" evidence="1">
    <location>
        <begin position="8"/>
        <end position="28"/>
    </location>
</feature>
<feature type="transmembrane region" description="Helical" evidence="1">
    <location>
        <begin position="41"/>
        <end position="61"/>
    </location>
</feature>
<feature type="helix" evidence="2">
    <location>
        <begin position="2"/>
        <end position="27"/>
    </location>
</feature>
<feature type="strand" evidence="2">
    <location>
        <begin position="30"/>
        <end position="32"/>
    </location>
</feature>
<feature type="turn" evidence="2">
    <location>
        <begin position="33"/>
        <end position="35"/>
    </location>
</feature>
<feature type="helix" evidence="2">
    <location>
        <begin position="37"/>
        <end position="60"/>
    </location>
</feature>
<evidence type="ECO:0000255" key="1">
    <source>
        <dbReference type="HAMAP-Rule" id="MF_00644"/>
    </source>
</evidence>
<evidence type="ECO:0007829" key="2">
    <source>
        <dbReference type="PDB" id="5XNL"/>
    </source>
</evidence>
<reference key="1">
    <citation type="journal article" date="1986" name="Plant Mol. Biol.">
        <title>Structure of a 3.2 kb region of pea chloroplast DNA containing the gene for the 44 kD photosystem II polypeptide.</title>
        <authorList>
            <person name="Bookjans G.B."/>
            <person name="Stummann B.M."/>
            <person name="Rasmussen O.F."/>
            <person name="Henningsen K.W."/>
        </authorList>
        <dbReference type="AGRICOLA" id="IND87019930"/>
    </citation>
    <scope>NUCLEOTIDE SEQUENCE [GENOMIC DNA]</scope>
    <source>
        <strain>cv. Rosakrone</strain>
    </source>
</reference>
<accession>Q32902</accession>
<organism>
    <name type="scientific">Pisum sativum</name>
    <name type="common">Garden pea</name>
    <name type="synonym">Lathyrus oleraceus</name>
    <dbReference type="NCBI Taxonomy" id="3888"/>
    <lineage>
        <taxon>Eukaryota</taxon>
        <taxon>Viridiplantae</taxon>
        <taxon>Streptophyta</taxon>
        <taxon>Embryophyta</taxon>
        <taxon>Tracheophyta</taxon>
        <taxon>Spermatophyta</taxon>
        <taxon>Magnoliopsida</taxon>
        <taxon>eudicotyledons</taxon>
        <taxon>Gunneridae</taxon>
        <taxon>Pentapetalae</taxon>
        <taxon>rosids</taxon>
        <taxon>fabids</taxon>
        <taxon>Fabales</taxon>
        <taxon>Fabaceae</taxon>
        <taxon>Papilionoideae</taxon>
        <taxon>50 kb inversion clade</taxon>
        <taxon>NPAAA clade</taxon>
        <taxon>Hologalegina</taxon>
        <taxon>IRL clade</taxon>
        <taxon>Fabeae</taxon>
        <taxon>Pisum</taxon>
    </lineage>
</organism>
<protein>
    <recommendedName>
        <fullName evidence="1">Photosystem II reaction center protein Z</fullName>
        <shortName evidence="1">PSII-Z</shortName>
    </recommendedName>
</protein>
<comment type="function">
    <text evidence="1">May control the interaction of photosystem II (PSII) cores with the light-harvesting antenna, regulates electron flow through the 2 photosystem reaction centers. PSII is a light-driven water plastoquinone oxidoreductase, using light energy to abstract electrons from H(2)O, generating a proton gradient subsequently used for ATP formation.</text>
</comment>
<comment type="subunit">
    <text evidence="1">PSII is composed of 1 copy each of membrane proteins PsbA, PsbB, PsbC, PsbD, PsbE, PsbF, PsbH, PsbI, PsbJ, PsbK, PsbL, PsbM, PsbT, PsbY, PsbZ, Psb30/Ycf12, at least 3 peripheral proteins of the oxygen-evolving complex and a large number of cofactors. It forms dimeric complexes.</text>
</comment>
<comment type="subcellular location">
    <subcellularLocation>
        <location evidence="1">Plastid</location>
        <location evidence="1">Chloroplast thylakoid membrane</location>
        <topology evidence="1">Multi-pass membrane protein</topology>
    </subcellularLocation>
</comment>
<comment type="similarity">
    <text evidence="1">Belongs to the PsbZ family.</text>
</comment>
<dbReference type="EMBL" id="M27309">
    <property type="protein sequence ID" value="AAB59337.1"/>
    <property type="molecule type" value="Genomic_DNA"/>
</dbReference>
<dbReference type="RefSeq" id="YP_003587542.1">
    <property type="nucleotide sequence ID" value="NC_014057.1"/>
</dbReference>
<dbReference type="PDB" id="5XNL">
    <property type="method" value="EM"/>
    <property type="resolution" value="2.70 A"/>
    <property type="chains" value="Z/z=1-62"/>
</dbReference>
<dbReference type="PDB" id="5XNM">
    <property type="method" value="EM"/>
    <property type="resolution" value="3.20 A"/>
    <property type="chains" value="Z/z=1-62"/>
</dbReference>
<dbReference type="PDB" id="6YP7">
    <property type="method" value="EM"/>
    <property type="resolution" value="3.80 A"/>
    <property type="chains" value="Z/z=1-62"/>
</dbReference>
<dbReference type="PDBsum" id="5XNL"/>
<dbReference type="PDBsum" id="5XNM"/>
<dbReference type="PDBsum" id="6YP7"/>
<dbReference type="EMDB" id="EMD-10865"/>
<dbReference type="EMDB" id="EMD-6741"/>
<dbReference type="EMDB" id="EMD-6742"/>
<dbReference type="SMR" id="Q32902"/>
<dbReference type="GeneID" id="9073080"/>
<dbReference type="GO" id="GO:0009535">
    <property type="term" value="C:chloroplast thylakoid membrane"/>
    <property type="evidence" value="ECO:0007669"/>
    <property type="project" value="UniProtKB-SubCell"/>
</dbReference>
<dbReference type="GO" id="GO:0009539">
    <property type="term" value="C:photosystem II reaction center"/>
    <property type="evidence" value="ECO:0007669"/>
    <property type="project" value="InterPro"/>
</dbReference>
<dbReference type="GO" id="GO:0015979">
    <property type="term" value="P:photosynthesis"/>
    <property type="evidence" value="ECO:0007669"/>
    <property type="project" value="UniProtKB-UniRule"/>
</dbReference>
<dbReference type="GO" id="GO:0042549">
    <property type="term" value="P:photosystem II stabilization"/>
    <property type="evidence" value="ECO:0007669"/>
    <property type="project" value="InterPro"/>
</dbReference>
<dbReference type="FunFam" id="1.10.287.740:FF:000001">
    <property type="entry name" value="Photosystem II reaction center protein Z"/>
    <property type="match status" value="1"/>
</dbReference>
<dbReference type="Gene3D" id="1.10.287.740">
    <property type="entry name" value="Photosystem II PsbZ, reaction centre"/>
    <property type="match status" value="1"/>
</dbReference>
<dbReference type="HAMAP" id="MF_00644">
    <property type="entry name" value="PSII_PsbZ"/>
    <property type="match status" value="1"/>
</dbReference>
<dbReference type="InterPro" id="IPR002644">
    <property type="entry name" value="PSII_PsbZ"/>
</dbReference>
<dbReference type="InterPro" id="IPR036512">
    <property type="entry name" value="PSII_PsbZ_sf"/>
</dbReference>
<dbReference type="NCBIfam" id="TIGR03043">
    <property type="entry name" value="PS_II_psbZ"/>
    <property type="match status" value="1"/>
</dbReference>
<dbReference type="PANTHER" id="PTHR34971">
    <property type="entry name" value="PHOTOSYSTEM II REACTION CENTER PROTEIN Z"/>
    <property type="match status" value="1"/>
</dbReference>
<dbReference type="PANTHER" id="PTHR34971:SF2">
    <property type="entry name" value="PHOTOSYSTEM II REACTION CENTER PROTEIN Z"/>
    <property type="match status" value="1"/>
</dbReference>
<dbReference type="Pfam" id="PF01737">
    <property type="entry name" value="Ycf9"/>
    <property type="match status" value="1"/>
</dbReference>
<dbReference type="SUPFAM" id="SSF161055">
    <property type="entry name" value="PsbZ-like"/>
    <property type="match status" value="1"/>
</dbReference>
<keyword id="KW-0002">3D-structure</keyword>
<keyword id="KW-0150">Chloroplast</keyword>
<keyword id="KW-0472">Membrane</keyword>
<keyword id="KW-0602">Photosynthesis</keyword>
<keyword id="KW-0604">Photosystem II</keyword>
<keyword id="KW-0934">Plastid</keyword>
<keyword id="KW-0674">Reaction center</keyword>
<keyword id="KW-0793">Thylakoid</keyword>
<keyword id="KW-0812">Transmembrane</keyword>
<keyword id="KW-1133">Transmembrane helix</keyword>